<protein>
    <recommendedName>
        <fullName evidence="1">Glutamate--tRNA ligase</fullName>
        <ecNumber evidence="1">6.1.1.17</ecNumber>
    </recommendedName>
    <alternativeName>
        <fullName evidence="1">Glutamyl-tRNA synthetase</fullName>
        <shortName evidence="1">GluRS</shortName>
    </alternativeName>
</protein>
<feature type="chain" id="PRO_1000090068" description="Glutamate--tRNA ligase">
    <location>
        <begin position="1"/>
        <end position="466"/>
    </location>
</feature>
<feature type="short sequence motif" description="'HIGH' region" evidence="1">
    <location>
        <begin position="11"/>
        <end position="21"/>
    </location>
</feature>
<feature type="short sequence motif" description="'KMSKS' region" evidence="1">
    <location>
        <begin position="243"/>
        <end position="247"/>
    </location>
</feature>
<feature type="binding site" evidence="1">
    <location>
        <position position="246"/>
    </location>
    <ligand>
        <name>ATP</name>
        <dbReference type="ChEBI" id="CHEBI:30616"/>
    </ligand>
</feature>
<organism>
    <name type="scientific">Cupriavidus taiwanensis (strain DSM 17343 / BCRC 17206 / CCUG 44338 / CIP 107171 / LMG 19424 / R1)</name>
    <name type="common">Ralstonia taiwanensis (strain LMG 19424)</name>
    <dbReference type="NCBI Taxonomy" id="977880"/>
    <lineage>
        <taxon>Bacteria</taxon>
        <taxon>Pseudomonadati</taxon>
        <taxon>Pseudomonadota</taxon>
        <taxon>Betaproteobacteria</taxon>
        <taxon>Burkholderiales</taxon>
        <taxon>Burkholderiaceae</taxon>
        <taxon>Cupriavidus</taxon>
    </lineage>
</organism>
<keyword id="KW-0030">Aminoacyl-tRNA synthetase</keyword>
<keyword id="KW-0067">ATP-binding</keyword>
<keyword id="KW-0963">Cytoplasm</keyword>
<keyword id="KW-0436">Ligase</keyword>
<keyword id="KW-0547">Nucleotide-binding</keyword>
<keyword id="KW-0648">Protein biosynthesis</keyword>
<evidence type="ECO:0000255" key="1">
    <source>
        <dbReference type="HAMAP-Rule" id="MF_00022"/>
    </source>
</evidence>
<dbReference type="EC" id="6.1.1.17" evidence="1"/>
<dbReference type="EMBL" id="CU633749">
    <property type="protein sequence ID" value="CAQ69887.1"/>
    <property type="molecule type" value="Genomic_DNA"/>
</dbReference>
<dbReference type="RefSeq" id="WP_012353198.1">
    <property type="nucleotide sequence ID" value="NC_010528.1"/>
</dbReference>
<dbReference type="SMR" id="B3R1N9"/>
<dbReference type="GeneID" id="29761084"/>
<dbReference type="KEGG" id="cti:RALTA_A1946"/>
<dbReference type="eggNOG" id="COG0008">
    <property type="taxonomic scope" value="Bacteria"/>
</dbReference>
<dbReference type="HOGENOM" id="CLU_015768_6_1_4"/>
<dbReference type="BioCyc" id="CTAI977880:RALTA_RS09420-MONOMER"/>
<dbReference type="Proteomes" id="UP000001692">
    <property type="component" value="Chromosome 1"/>
</dbReference>
<dbReference type="GO" id="GO:0005829">
    <property type="term" value="C:cytosol"/>
    <property type="evidence" value="ECO:0007669"/>
    <property type="project" value="TreeGrafter"/>
</dbReference>
<dbReference type="GO" id="GO:0005524">
    <property type="term" value="F:ATP binding"/>
    <property type="evidence" value="ECO:0007669"/>
    <property type="project" value="UniProtKB-UniRule"/>
</dbReference>
<dbReference type="GO" id="GO:0004818">
    <property type="term" value="F:glutamate-tRNA ligase activity"/>
    <property type="evidence" value="ECO:0007669"/>
    <property type="project" value="UniProtKB-UniRule"/>
</dbReference>
<dbReference type="GO" id="GO:0000049">
    <property type="term" value="F:tRNA binding"/>
    <property type="evidence" value="ECO:0007669"/>
    <property type="project" value="InterPro"/>
</dbReference>
<dbReference type="GO" id="GO:0008270">
    <property type="term" value="F:zinc ion binding"/>
    <property type="evidence" value="ECO:0007669"/>
    <property type="project" value="InterPro"/>
</dbReference>
<dbReference type="GO" id="GO:0006424">
    <property type="term" value="P:glutamyl-tRNA aminoacylation"/>
    <property type="evidence" value="ECO:0007669"/>
    <property type="project" value="UniProtKB-UniRule"/>
</dbReference>
<dbReference type="CDD" id="cd00808">
    <property type="entry name" value="GluRS_core"/>
    <property type="match status" value="1"/>
</dbReference>
<dbReference type="FunFam" id="3.40.50.620:FF:000007">
    <property type="entry name" value="Glutamate--tRNA ligase"/>
    <property type="match status" value="1"/>
</dbReference>
<dbReference type="Gene3D" id="1.10.10.350">
    <property type="match status" value="1"/>
</dbReference>
<dbReference type="Gene3D" id="3.40.50.620">
    <property type="entry name" value="HUPs"/>
    <property type="match status" value="1"/>
</dbReference>
<dbReference type="HAMAP" id="MF_00022">
    <property type="entry name" value="Glu_tRNA_synth_type1"/>
    <property type="match status" value="1"/>
</dbReference>
<dbReference type="InterPro" id="IPR045462">
    <property type="entry name" value="aa-tRNA-synth_I_cd-bd"/>
</dbReference>
<dbReference type="InterPro" id="IPR020751">
    <property type="entry name" value="aa-tRNA-synth_I_codon-bd_sub2"/>
</dbReference>
<dbReference type="InterPro" id="IPR001412">
    <property type="entry name" value="aa-tRNA-synth_I_CS"/>
</dbReference>
<dbReference type="InterPro" id="IPR008925">
    <property type="entry name" value="aa_tRNA-synth_I_cd-bd_sf"/>
</dbReference>
<dbReference type="InterPro" id="IPR004527">
    <property type="entry name" value="Glu-tRNA-ligase_bac/mito"/>
</dbReference>
<dbReference type="InterPro" id="IPR000924">
    <property type="entry name" value="Glu/Gln-tRNA-synth"/>
</dbReference>
<dbReference type="InterPro" id="IPR020058">
    <property type="entry name" value="Glu/Gln-tRNA-synth_Ib_cat-dom"/>
</dbReference>
<dbReference type="InterPro" id="IPR049940">
    <property type="entry name" value="GluQ/Sye"/>
</dbReference>
<dbReference type="InterPro" id="IPR033910">
    <property type="entry name" value="GluRS_core"/>
</dbReference>
<dbReference type="InterPro" id="IPR014729">
    <property type="entry name" value="Rossmann-like_a/b/a_fold"/>
</dbReference>
<dbReference type="NCBIfam" id="TIGR00464">
    <property type="entry name" value="gltX_bact"/>
    <property type="match status" value="1"/>
</dbReference>
<dbReference type="PANTHER" id="PTHR43311">
    <property type="entry name" value="GLUTAMATE--TRNA LIGASE"/>
    <property type="match status" value="1"/>
</dbReference>
<dbReference type="PANTHER" id="PTHR43311:SF2">
    <property type="entry name" value="GLUTAMATE--TRNA LIGASE, MITOCHONDRIAL-RELATED"/>
    <property type="match status" value="1"/>
</dbReference>
<dbReference type="Pfam" id="PF19269">
    <property type="entry name" value="Anticodon_2"/>
    <property type="match status" value="1"/>
</dbReference>
<dbReference type="Pfam" id="PF00749">
    <property type="entry name" value="tRNA-synt_1c"/>
    <property type="match status" value="1"/>
</dbReference>
<dbReference type="PRINTS" id="PR00987">
    <property type="entry name" value="TRNASYNTHGLU"/>
</dbReference>
<dbReference type="SUPFAM" id="SSF48163">
    <property type="entry name" value="An anticodon-binding domain of class I aminoacyl-tRNA synthetases"/>
    <property type="match status" value="1"/>
</dbReference>
<dbReference type="SUPFAM" id="SSF52374">
    <property type="entry name" value="Nucleotidylyl transferase"/>
    <property type="match status" value="1"/>
</dbReference>
<dbReference type="PROSITE" id="PS00178">
    <property type="entry name" value="AA_TRNA_LIGASE_I"/>
    <property type="match status" value="1"/>
</dbReference>
<proteinExistence type="inferred from homology"/>
<accession>B3R1N9</accession>
<name>SYE_CUPTR</name>
<reference key="1">
    <citation type="journal article" date="2008" name="Genome Res.">
        <title>Genome sequence of the beta-rhizobium Cupriavidus taiwanensis and comparative genomics of rhizobia.</title>
        <authorList>
            <person name="Amadou C."/>
            <person name="Pascal G."/>
            <person name="Mangenot S."/>
            <person name="Glew M."/>
            <person name="Bontemps C."/>
            <person name="Capela D."/>
            <person name="Carrere S."/>
            <person name="Cruveiller S."/>
            <person name="Dossat C."/>
            <person name="Lajus A."/>
            <person name="Marchetti M."/>
            <person name="Poinsot V."/>
            <person name="Rouy Z."/>
            <person name="Servin B."/>
            <person name="Saad M."/>
            <person name="Schenowitz C."/>
            <person name="Barbe V."/>
            <person name="Batut J."/>
            <person name="Medigue C."/>
            <person name="Masson-Boivin C."/>
        </authorList>
    </citation>
    <scope>NUCLEOTIDE SEQUENCE [LARGE SCALE GENOMIC DNA]</scope>
    <source>
        <strain>DSM 17343 / BCRC 17206 / CCUG 44338 / CIP 107171 / LMG 19424 / R1</strain>
    </source>
</reference>
<comment type="function">
    <text evidence="1">Catalyzes the attachment of glutamate to tRNA(Glu) in a two-step reaction: glutamate is first activated by ATP to form Glu-AMP and then transferred to the acceptor end of tRNA(Glu).</text>
</comment>
<comment type="catalytic activity">
    <reaction evidence="1">
        <text>tRNA(Glu) + L-glutamate + ATP = L-glutamyl-tRNA(Glu) + AMP + diphosphate</text>
        <dbReference type="Rhea" id="RHEA:23540"/>
        <dbReference type="Rhea" id="RHEA-COMP:9663"/>
        <dbReference type="Rhea" id="RHEA-COMP:9680"/>
        <dbReference type="ChEBI" id="CHEBI:29985"/>
        <dbReference type="ChEBI" id="CHEBI:30616"/>
        <dbReference type="ChEBI" id="CHEBI:33019"/>
        <dbReference type="ChEBI" id="CHEBI:78442"/>
        <dbReference type="ChEBI" id="CHEBI:78520"/>
        <dbReference type="ChEBI" id="CHEBI:456215"/>
        <dbReference type="EC" id="6.1.1.17"/>
    </reaction>
</comment>
<comment type="subunit">
    <text evidence="1">Monomer.</text>
</comment>
<comment type="subcellular location">
    <subcellularLocation>
        <location evidence="1">Cytoplasm</location>
    </subcellularLocation>
</comment>
<comment type="similarity">
    <text evidence="1">Belongs to the class-I aminoacyl-tRNA synthetase family. Glutamate--tRNA ligase type 1 subfamily.</text>
</comment>
<gene>
    <name evidence="1" type="primary">gltX</name>
    <name type="ordered locus">RALTA_A1946</name>
</gene>
<sequence>MTQRVRTRFAPSPTGFIHLGNIRSALYPWAFARRMQGDFILRIEDTDVERSSQEAVDVILESMAWLELDIDEGPFYQMQRMDRYREVVAQMVEAGLAYRCYMSTAELDALREAQRERGEKPRYNGFWRPEPGKVLPEPPAGVDPVIRFKNPIGGSVVWDDAVKGRIEISNDELDDLVIARPDGTPTYNFCVVVDDLDMRITHVIRGDDHVNNTPRQINIIRALGGTPPVYAHLPTVLNEQGEKMSKRHGAMSVTGYRDEGYLPEAVLNYLARLGWAHGDAEIFSREQFVEWFDLEHLGKSPAQYNPEKLAWLNNHYIKVGDNQRLATLTQPFIEALGGKVEGADLVGVIALVKDRANTLKEVAQAALLFYRGEPQADAALKAEHLTPEIQPALAALSARLGALPSWTREEISATFKAVLAEFGLKMPKLAMPVRLLVAGQLQTPSIDAVLELFGRDTVLRRLAAAA</sequence>